<dbReference type="EMBL" id="CP000477">
    <property type="protein sequence ID" value="ABK14797.1"/>
    <property type="molecule type" value="Genomic_DNA"/>
</dbReference>
<dbReference type="RefSeq" id="WP_011696191.1">
    <property type="nucleotide sequence ID" value="NC_008553.1"/>
</dbReference>
<dbReference type="SMR" id="A0B7X3"/>
<dbReference type="STRING" id="349307.Mthe_1012"/>
<dbReference type="GeneID" id="4463211"/>
<dbReference type="KEGG" id="mtp:Mthe_1012"/>
<dbReference type="HOGENOM" id="CLU_096329_0_0_2"/>
<dbReference type="OrthoDB" id="85381at2157"/>
<dbReference type="Proteomes" id="UP000000674">
    <property type="component" value="Chromosome"/>
</dbReference>
<dbReference type="GO" id="GO:0005524">
    <property type="term" value="F:ATP binding"/>
    <property type="evidence" value="ECO:0007669"/>
    <property type="project" value="UniProtKB-UniRule"/>
</dbReference>
<dbReference type="Gene3D" id="3.40.50.300">
    <property type="entry name" value="P-loop containing nucleotide triphosphate hydrolases"/>
    <property type="match status" value="1"/>
</dbReference>
<dbReference type="HAMAP" id="MF_01111">
    <property type="entry name" value="UPF0200"/>
    <property type="match status" value="1"/>
</dbReference>
<dbReference type="InterPro" id="IPR022970">
    <property type="entry name" value="NTP_hydrolase-rel"/>
</dbReference>
<dbReference type="InterPro" id="IPR027417">
    <property type="entry name" value="P-loop_NTPase"/>
</dbReference>
<dbReference type="PANTHER" id="PTHR41930:SF1">
    <property type="entry name" value="DEPHOSPHO-COA KINASE"/>
    <property type="match status" value="1"/>
</dbReference>
<dbReference type="PANTHER" id="PTHR41930">
    <property type="entry name" value="UPF0200 PROTEIN MJ1399"/>
    <property type="match status" value="1"/>
</dbReference>
<dbReference type="Pfam" id="PF13207">
    <property type="entry name" value="AAA_17"/>
    <property type="match status" value="1"/>
</dbReference>
<dbReference type="SUPFAM" id="SSF52540">
    <property type="entry name" value="P-loop containing nucleoside triphosphate hydrolases"/>
    <property type="match status" value="1"/>
</dbReference>
<proteinExistence type="inferred from homology"/>
<sequence>MRIIGFVGMPGSGKSVASDVAREMGIRVVVMGDVVRAEARRRGLEPTDANHGMVGDELRRSEGEDAIARRCLEGLSRDETIVVDGIRSGAEVEYFRSVADRFHLIEIFTPPEQRLRRIAARGRSDDNNCGDLSEALERRDARELGWGMGEAIAAAGMRICNDCTLDEFRERIRVVLEELCRS</sequence>
<protein>
    <recommendedName>
        <fullName evidence="1">UPF0200 protein Mthe_1012</fullName>
    </recommendedName>
</protein>
<comment type="similarity">
    <text evidence="1">Belongs to the UPF0200 family.</text>
</comment>
<organism>
    <name type="scientific">Methanothrix thermoacetophila (strain DSM 6194 / JCM 14653 / NBRC 101360 / PT)</name>
    <name type="common">Methanosaeta thermophila</name>
    <dbReference type="NCBI Taxonomy" id="349307"/>
    <lineage>
        <taxon>Archaea</taxon>
        <taxon>Methanobacteriati</taxon>
        <taxon>Methanobacteriota</taxon>
        <taxon>Stenosarchaea group</taxon>
        <taxon>Methanomicrobia</taxon>
        <taxon>Methanotrichales</taxon>
        <taxon>Methanotrichaceae</taxon>
        <taxon>Methanothrix</taxon>
    </lineage>
</organism>
<accession>A0B7X3</accession>
<feature type="chain" id="PRO_1000084873" description="UPF0200 protein Mthe_1012">
    <location>
        <begin position="1"/>
        <end position="182"/>
    </location>
</feature>
<feature type="binding site" evidence="1">
    <location>
        <begin position="8"/>
        <end position="15"/>
    </location>
    <ligand>
        <name>ATP</name>
        <dbReference type="ChEBI" id="CHEBI:30616"/>
    </ligand>
</feature>
<keyword id="KW-0067">ATP-binding</keyword>
<keyword id="KW-0547">Nucleotide-binding</keyword>
<keyword id="KW-1185">Reference proteome</keyword>
<name>Y1012_METTP</name>
<reference key="1">
    <citation type="submission" date="2006-10" db="EMBL/GenBank/DDBJ databases">
        <title>Complete sequence of Methanosaeta thermophila PT.</title>
        <authorList>
            <consortium name="US DOE Joint Genome Institute"/>
            <person name="Copeland A."/>
            <person name="Lucas S."/>
            <person name="Lapidus A."/>
            <person name="Barry K."/>
            <person name="Detter J.C."/>
            <person name="Glavina del Rio T."/>
            <person name="Hammon N."/>
            <person name="Israni S."/>
            <person name="Pitluck S."/>
            <person name="Chain P."/>
            <person name="Malfatti S."/>
            <person name="Shin M."/>
            <person name="Vergez L."/>
            <person name="Schmutz J."/>
            <person name="Larimer F."/>
            <person name="Land M."/>
            <person name="Hauser L."/>
            <person name="Kyrpides N."/>
            <person name="Kim E."/>
            <person name="Smith K.S."/>
            <person name="Ingram-Smith C."/>
            <person name="Richardson P."/>
        </authorList>
    </citation>
    <scope>NUCLEOTIDE SEQUENCE [LARGE SCALE GENOMIC DNA]</scope>
    <source>
        <strain>DSM 6194 / JCM 14653 / NBRC 101360 / PT</strain>
    </source>
</reference>
<evidence type="ECO:0000255" key="1">
    <source>
        <dbReference type="HAMAP-Rule" id="MF_01111"/>
    </source>
</evidence>
<gene>
    <name type="ordered locus">Mthe_1012</name>
</gene>